<reference key="1">
    <citation type="journal article" date="2001" name="Lancet">
        <title>Whole genome sequencing of meticillin-resistant Staphylococcus aureus.</title>
        <authorList>
            <person name="Kuroda M."/>
            <person name="Ohta T."/>
            <person name="Uchiyama I."/>
            <person name="Baba T."/>
            <person name="Yuzawa H."/>
            <person name="Kobayashi I."/>
            <person name="Cui L."/>
            <person name="Oguchi A."/>
            <person name="Aoki K."/>
            <person name="Nagai Y."/>
            <person name="Lian J.-Q."/>
            <person name="Ito T."/>
            <person name="Kanamori M."/>
            <person name="Matsumaru H."/>
            <person name="Maruyama A."/>
            <person name="Murakami H."/>
            <person name="Hosoyama A."/>
            <person name="Mizutani-Ui Y."/>
            <person name="Takahashi N.K."/>
            <person name="Sawano T."/>
            <person name="Inoue R."/>
            <person name="Kaito C."/>
            <person name="Sekimizu K."/>
            <person name="Hirakawa H."/>
            <person name="Kuhara S."/>
            <person name="Goto S."/>
            <person name="Yabuzaki J."/>
            <person name="Kanehisa M."/>
            <person name="Yamashita A."/>
            <person name="Oshima K."/>
            <person name="Furuya K."/>
            <person name="Yoshino C."/>
            <person name="Shiba T."/>
            <person name="Hattori M."/>
            <person name="Ogasawara N."/>
            <person name="Hayashi H."/>
            <person name="Hiramatsu K."/>
        </authorList>
    </citation>
    <scope>NUCLEOTIDE SEQUENCE [LARGE SCALE GENOMIC DNA]</scope>
    <source>
        <strain>N315</strain>
    </source>
</reference>
<reference key="2">
    <citation type="submission" date="2007-10" db="UniProtKB">
        <title>Shotgun proteomic analysis of total and membrane protein extracts of S. aureus strain N315.</title>
        <authorList>
            <person name="Vaezzadeh A.R."/>
            <person name="Deshusses J."/>
            <person name="Lescuyer P."/>
            <person name="Hochstrasser D.F."/>
        </authorList>
    </citation>
    <scope>IDENTIFICATION BY MASS SPECTROMETRY [LARGE SCALE ANALYSIS]</scope>
    <source>
        <strain>N315</strain>
    </source>
</reference>
<dbReference type="EMBL" id="BA000018">
    <property type="protein sequence ID" value="BAB42739.1"/>
    <property type="molecule type" value="Genomic_DNA"/>
</dbReference>
<dbReference type="PIR" id="F89947">
    <property type="entry name" value="F89947"/>
</dbReference>
<dbReference type="RefSeq" id="WP_000457386.1">
    <property type="nucleotide sequence ID" value="NC_002745.2"/>
</dbReference>
<dbReference type="SMR" id="Q7A583"/>
<dbReference type="EnsemblBacteria" id="BAB42739">
    <property type="protein sequence ID" value="BAB42739"/>
    <property type="gene ID" value="BAB42739"/>
</dbReference>
<dbReference type="GeneID" id="66839833"/>
<dbReference type="KEGG" id="sau:SA1473"/>
<dbReference type="HOGENOM" id="CLU_061463_3_2_9"/>
<dbReference type="GO" id="GO:0005737">
    <property type="term" value="C:cytoplasm"/>
    <property type="evidence" value="ECO:0007669"/>
    <property type="project" value="UniProtKB-ARBA"/>
</dbReference>
<dbReference type="GO" id="GO:1990904">
    <property type="term" value="C:ribonucleoprotein complex"/>
    <property type="evidence" value="ECO:0007669"/>
    <property type="project" value="UniProtKB-KW"/>
</dbReference>
<dbReference type="GO" id="GO:0005840">
    <property type="term" value="C:ribosome"/>
    <property type="evidence" value="ECO:0007669"/>
    <property type="project" value="UniProtKB-KW"/>
</dbReference>
<dbReference type="GO" id="GO:0019843">
    <property type="term" value="F:rRNA binding"/>
    <property type="evidence" value="ECO:0007669"/>
    <property type="project" value="UniProtKB-UniRule"/>
</dbReference>
<dbReference type="GO" id="GO:0003735">
    <property type="term" value="F:structural constituent of ribosome"/>
    <property type="evidence" value="ECO:0007669"/>
    <property type="project" value="InterPro"/>
</dbReference>
<dbReference type="GO" id="GO:0006412">
    <property type="term" value="P:translation"/>
    <property type="evidence" value="ECO:0007669"/>
    <property type="project" value="UniProtKB-UniRule"/>
</dbReference>
<dbReference type="HAMAP" id="MF_01363">
    <property type="entry name" value="Ribosomal_bL21"/>
    <property type="match status" value="1"/>
</dbReference>
<dbReference type="InterPro" id="IPR028909">
    <property type="entry name" value="bL21-like"/>
</dbReference>
<dbReference type="InterPro" id="IPR036164">
    <property type="entry name" value="bL21-like_sf"/>
</dbReference>
<dbReference type="InterPro" id="IPR001787">
    <property type="entry name" value="Ribosomal_bL21"/>
</dbReference>
<dbReference type="NCBIfam" id="TIGR00061">
    <property type="entry name" value="L21"/>
    <property type="match status" value="1"/>
</dbReference>
<dbReference type="PANTHER" id="PTHR21349">
    <property type="entry name" value="50S RIBOSOMAL PROTEIN L21"/>
    <property type="match status" value="1"/>
</dbReference>
<dbReference type="PANTHER" id="PTHR21349:SF0">
    <property type="entry name" value="LARGE RIBOSOMAL SUBUNIT PROTEIN BL21M"/>
    <property type="match status" value="1"/>
</dbReference>
<dbReference type="Pfam" id="PF00829">
    <property type="entry name" value="Ribosomal_L21p"/>
    <property type="match status" value="1"/>
</dbReference>
<dbReference type="SUPFAM" id="SSF141091">
    <property type="entry name" value="L21p-like"/>
    <property type="match status" value="1"/>
</dbReference>
<sequence>MFAIIETGGKQIKVEEGQEIFVEKLDVNEGDTFTFDKVLFVGGDSVKVGAPTVEGATVTATVNKQGRGKKITVFTYKRRKNSKRKKGHRQPYTKLTIDKINA</sequence>
<organism>
    <name type="scientific">Staphylococcus aureus (strain N315)</name>
    <dbReference type="NCBI Taxonomy" id="158879"/>
    <lineage>
        <taxon>Bacteria</taxon>
        <taxon>Bacillati</taxon>
        <taxon>Bacillota</taxon>
        <taxon>Bacilli</taxon>
        <taxon>Bacillales</taxon>
        <taxon>Staphylococcaceae</taxon>
        <taxon>Staphylococcus</taxon>
    </lineage>
</organism>
<protein>
    <recommendedName>
        <fullName evidence="1">Large ribosomal subunit protein bL21</fullName>
    </recommendedName>
    <alternativeName>
        <fullName evidence="3">50S ribosomal protein L21</fullName>
    </alternativeName>
</protein>
<comment type="function">
    <text evidence="1">This protein binds to 23S rRNA in the presence of protein L20.</text>
</comment>
<comment type="subunit">
    <text evidence="1">Part of the 50S ribosomal subunit. Contacts protein L20.</text>
</comment>
<comment type="similarity">
    <text evidence="1">Belongs to the bacterial ribosomal protein bL21 family.</text>
</comment>
<proteinExistence type="evidence at protein level"/>
<feature type="chain" id="PRO_0000224938" description="Large ribosomal subunit protein bL21">
    <location>
        <begin position="1"/>
        <end position="102"/>
    </location>
</feature>
<feature type="region of interest" description="Disordered" evidence="2">
    <location>
        <begin position="80"/>
        <end position="102"/>
    </location>
</feature>
<feature type="compositionally biased region" description="Basic residues" evidence="2">
    <location>
        <begin position="80"/>
        <end position="91"/>
    </location>
</feature>
<accession>Q7A583</accession>
<gene>
    <name evidence="1" type="primary">rplU</name>
    <name type="ordered locus">SA1473</name>
</gene>
<name>RL21_STAAN</name>
<evidence type="ECO:0000255" key="1">
    <source>
        <dbReference type="HAMAP-Rule" id="MF_01363"/>
    </source>
</evidence>
<evidence type="ECO:0000256" key="2">
    <source>
        <dbReference type="SAM" id="MobiDB-lite"/>
    </source>
</evidence>
<evidence type="ECO:0000305" key="3"/>
<keyword id="KW-0687">Ribonucleoprotein</keyword>
<keyword id="KW-0689">Ribosomal protein</keyword>
<keyword id="KW-0694">RNA-binding</keyword>
<keyword id="KW-0699">rRNA-binding</keyword>